<keyword id="KW-0131">Cell cycle</keyword>
<keyword id="KW-0132">Cell division</keyword>
<keyword id="KW-0143">Chaperone</keyword>
<keyword id="KW-0963">Cytoplasm</keyword>
<keyword id="KW-0413">Isomerase</keyword>
<keyword id="KW-0697">Rotamase</keyword>
<proteinExistence type="inferred from homology"/>
<reference key="1">
    <citation type="journal article" date="2008" name="J. Bacteriol.">
        <title>Complete genome sequence of the mosquitocidal bacterium Bacillus sphaericus C3-41 and comparison with those of closely related Bacillus species.</title>
        <authorList>
            <person name="Hu X."/>
            <person name="Fan W."/>
            <person name="Han B."/>
            <person name="Liu H."/>
            <person name="Zheng D."/>
            <person name="Li Q."/>
            <person name="Dong W."/>
            <person name="Yan J."/>
            <person name="Gao M."/>
            <person name="Berry C."/>
            <person name="Yuan Z."/>
        </authorList>
    </citation>
    <scope>NUCLEOTIDE SEQUENCE [LARGE SCALE GENOMIC DNA]</scope>
    <source>
        <strain>C3-41</strain>
    </source>
</reference>
<protein>
    <recommendedName>
        <fullName evidence="1">Trigger factor</fullName>
        <shortName evidence="1">TF</shortName>
        <ecNumber evidence="1">5.2.1.8</ecNumber>
    </recommendedName>
    <alternativeName>
        <fullName evidence="1">PPIase</fullName>
    </alternativeName>
</protein>
<accession>B1HVE6</accession>
<organism>
    <name type="scientific">Lysinibacillus sphaericus (strain C3-41)</name>
    <dbReference type="NCBI Taxonomy" id="444177"/>
    <lineage>
        <taxon>Bacteria</taxon>
        <taxon>Bacillati</taxon>
        <taxon>Bacillota</taxon>
        <taxon>Bacilli</taxon>
        <taxon>Bacillales</taxon>
        <taxon>Bacillaceae</taxon>
        <taxon>Lysinibacillus</taxon>
    </lineage>
</organism>
<name>TIG_LYSSC</name>
<sequence length="429" mass="47374">MSAKWEKQEGNIGTLTIEVPAAEVDAAMDQAFKKVVKQINVPGFRKGKMPRKMFEQRFGIESLYQDALEIIVPDSYAKAIDEAGIMPVDYPEIAGTENFVHGQDFSFTAQVTVKPEPKLGDYKGLEVAKLPVEVTDEEVDAQIQEQLARKAELEIKEDEAIVEGDTAVIDFEGFVGDEAFEGGKGEDYPLEIGSGSFIPGFEEQLTGVKAGESKDVVVTFPEEYHAAELAGKEATFKVTVKEVKTKVLPELNDEFAKELDSEVESVEALRAKIKEQTAAQKVAESDAALRDELVEKASENAEFEVPAGMINSETDRMLQEFGQRLQTQGMNLDLYYQFSGQSEEDLRGQMKEEAESRVRVSLTLEAIAEAEKIEATEADIEAELEKMAAQFNMTKEQITGALGGTAVLENDIKIQKTVEFLVENAKITE</sequence>
<comment type="function">
    <text evidence="1">Involved in protein export. Acts as a chaperone by maintaining the newly synthesized protein in an open conformation. Functions as a peptidyl-prolyl cis-trans isomerase.</text>
</comment>
<comment type="catalytic activity">
    <reaction evidence="1">
        <text>[protein]-peptidylproline (omega=180) = [protein]-peptidylproline (omega=0)</text>
        <dbReference type="Rhea" id="RHEA:16237"/>
        <dbReference type="Rhea" id="RHEA-COMP:10747"/>
        <dbReference type="Rhea" id="RHEA-COMP:10748"/>
        <dbReference type="ChEBI" id="CHEBI:83833"/>
        <dbReference type="ChEBI" id="CHEBI:83834"/>
        <dbReference type="EC" id="5.2.1.8"/>
    </reaction>
</comment>
<comment type="subcellular location">
    <subcellularLocation>
        <location>Cytoplasm</location>
    </subcellularLocation>
    <text evidence="1">About half TF is bound to the ribosome near the polypeptide exit tunnel while the other half is free in the cytoplasm.</text>
</comment>
<comment type="domain">
    <text evidence="1">Consists of 3 domains; the N-terminus binds the ribosome, the middle domain has PPIase activity, while the C-terminus has intrinsic chaperone activity on its own.</text>
</comment>
<comment type="similarity">
    <text evidence="1">Belongs to the FKBP-type PPIase family. Tig subfamily.</text>
</comment>
<evidence type="ECO:0000255" key="1">
    <source>
        <dbReference type="HAMAP-Rule" id="MF_00303"/>
    </source>
</evidence>
<feature type="chain" id="PRO_1000115551" description="Trigger factor">
    <location>
        <begin position="1"/>
        <end position="429"/>
    </location>
</feature>
<feature type="domain" description="PPIase FKBP-type" evidence="1">
    <location>
        <begin position="164"/>
        <end position="249"/>
    </location>
</feature>
<dbReference type="EC" id="5.2.1.8" evidence="1"/>
<dbReference type="EMBL" id="CP000817">
    <property type="protein sequence ID" value="ACA41448.1"/>
    <property type="molecule type" value="Genomic_DNA"/>
</dbReference>
<dbReference type="RefSeq" id="WP_012295491.1">
    <property type="nucleotide sequence ID" value="NC_010382.1"/>
</dbReference>
<dbReference type="SMR" id="B1HVE6"/>
<dbReference type="EnsemblBacteria" id="ACA41448">
    <property type="protein sequence ID" value="ACA41448"/>
    <property type="gene ID" value="Bsph_3980"/>
</dbReference>
<dbReference type="KEGG" id="lsp:Bsph_3980"/>
<dbReference type="HOGENOM" id="CLU_033058_3_2_9"/>
<dbReference type="Proteomes" id="UP000002164">
    <property type="component" value="Chromosome"/>
</dbReference>
<dbReference type="GO" id="GO:0005737">
    <property type="term" value="C:cytoplasm"/>
    <property type="evidence" value="ECO:0007669"/>
    <property type="project" value="UniProtKB-SubCell"/>
</dbReference>
<dbReference type="GO" id="GO:0003755">
    <property type="term" value="F:peptidyl-prolyl cis-trans isomerase activity"/>
    <property type="evidence" value="ECO:0007669"/>
    <property type="project" value="UniProtKB-UniRule"/>
</dbReference>
<dbReference type="GO" id="GO:0044183">
    <property type="term" value="F:protein folding chaperone"/>
    <property type="evidence" value="ECO:0007669"/>
    <property type="project" value="TreeGrafter"/>
</dbReference>
<dbReference type="GO" id="GO:0043022">
    <property type="term" value="F:ribosome binding"/>
    <property type="evidence" value="ECO:0007669"/>
    <property type="project" value="TreeGrafter"/>
</dbReference>
<dbReference type="GO" id="GO:0051083">
    <property type="term" value="P:'de novo' cotranslational protein folding"/>
    <property type="evidence" value="ECO:0007669"/>
    <property type="project" value="TreeGrafter"/>
</dbReference>
<dbReference type="GO" id="GO:0051301">
    <property type="term" value="P:cell division"/>
    <property type="evidence" value="ECO:0007669"/>
    <property type="project" value="UniProtKB-KW"/>
</dbReference>
<dbReference type="GO" id="GO:0061077">
    <property type="term" value="P:chaperone-mediated protein folding"/>
    <property type="evidence" value="ECO:0007669"/>
    <property type="project" value="TreeGrafter"/>
</dbReference>
<dbReference type="GO" id="GO:0015031">
    <property type="term" value="P:protein transport"/>
    <property type="evidence" value="ECO:0007669"/>
    <property type="project" value="UniProtKB-UniRule"/>
</dbReference>
<dbReference type="GO" id="GO:0043335">
    <property type="term" value="P:protein unfolding"/>
    <property type="evidence" value="ECO:0007669"/>
    <property type="project" value="TreeGrafter"/>
</dbReference>
<dbReference type="FunFam" id="3.10.50.40:FF:000001">
    <property type="entry name" value="Trigger factor"/>
    <property type="match status" value="1"/>
</dbReference>
<dbReference type="Gene3D" id="3.10.50.40">
    <property type="match status" value="1"/>
</dbReference>
<dbReference type="Gene3D" id="3.30.70.1050">
    <property type="entry name" value="Trigger factor ribosome-binding domain"/>
    <property type="match status" value="1"/>
</dbReference>
<dbReference type="Gene3D" id="1.10.3120.10">
    <property type="entry name" value="Trigger factor, C-terminal domain"/>
    <property type="match status" value="1"/>
</dbReference>
<dbReference type="HAMAP" id="MF_00303">
    <property type="entry name" value="Trigger_factor_Tig"/>
    <property type="match status" value="1"/>
</dbReference>
<dbReference type="InterPro" id="IPR046357">
    <property type="entry name" value="PPIase_dom_sf"/>
</dbReference>
<dbReference type="InterPro" id="IPR001179">
    <property type="entry name" value="PPIase_FKBP_dom"/>
</dbReference>
<dbReference type="InterPro" id="IPR005215">
    <property type="entry name" value="Trig_fac"/>
</dbReference>
<dbReference type="InterPro" id="IPR008880">
    <property type="entry name" value="Trigger_fac_C"/>
</dbReference>
<dbReference type="InterPro" id="IPR037041">
    <property type="entry name" value="Trigger_fac_C_sf"/>
</dbReference>
<dbReference type="InterPro" id="IPR008881">
    <property type="entry name" value="Trigger_fac_ribosome-bd_bac"/>
</dbReference>
<dbReference type="InterPro" id="IPR036611">
    <property type="entry name" value="Trigger_fac_ribosome-bd_sf"/>
</dbReference>
<dbReference type="InterPro" id="IPR027304">
    <property type="entry name" value="Trigger_fact/SurA_dom_sf"/>
</dbReference>
<dbReference type="NCBIfam" id="TIGR00115">
    <property type="entry name" value="tig"/>
    <property type="match status" value="1"/>
</dbReference>
<dbReference type="PANTHER" id="PTHR30560">
    <property type="entry name" value="TRIGGER FACTOR CHAPERONE AND PEPTIDYL-PROLYL CIS/TRANS ISOMERASE"/>
    <property type="match status" value="1"/>
</dbReference>
<dbReference type="PANTHER" id="PTHR30560:SF3">
    <property type="entry name" value="TRIGGER FACTOR-LIKE PROTEIN TIG, CHLOROPLASTIC"/>
    <property type="match status" value="1"/>
</dbReference>
<dbReference type="Pfam" id="PF00254">
    <property type="entry name" value="FKBP_C"/>
    <property type="match status" value="1"/>
</dbReference>
<dbReference type="Pfam" id="PF05698">
    <property type="entry name" value="Trigger_C"/>
    <property type="match status" value="1"/>
</dbReference>
<dbReference type="Pfam" id="PF05697">
    <property type="entry name" value="Trigger_N"/>
    <property type="match status" value="1"/>
</dbReference>
<dbReference type="PIRSF" id="PIRSF003095">
    <property type="entry name" value="Trigger_factor"/>
    <property type="match status" value="1"/>
</dbReference>
<dbReference type="SUPFAM" id="SSF54534">
    <property type="entry name" value="FKBP-like"/>
    <property type="match status" value="1"/>
</dbReference>
<dbReference type="SUPFAM" id="SSF109998">
    <property type="entry name" value="Triger factor/SurA peptide-binding domain-like"/>
    <property type="match status" value="1"/>
</dbReference>
<dbReference type="SUPFAM" id="SSF102735">
    <property type="entry name" value="Trigger factor ribosome-binding domain"/>
    <property type="match status" value="1"/>
</dbReference>
<dbReference type="PROSITE" id="PS50059">
    <property type="entry name" value="FKBP_PPIASE"/>
    <property type="match status" value="1"/>
</dbReference>
<gene>
    <name evidence="1" type="primary">tig</name>
    <name type="ordered locus">Bsph_3980</name>
</gene>